<evidence type="ECO:0000269" key="1">
    <source>
    </source>
</evidence>
<evidence type="ECO:0000269" key="2">
    <source>
    </source>
</evidence>
<evidence type="ECO:0000269" key="3">
    <source>
    </source>
</evidence>
<evidence type="ECO:0000303" key="4">
    <source>
    </source>
</evidence>
<evidence type="ECO:0000305" key="5"/>
<proteinExistence type="evidence at protein level"/>
<organism>
    <name type="scientific">Arabidopsis thaliana</name>
    <name type="common">Mouse-ear cress</name>
    <dbReference type="NCBI Taxonomy" id="3702"/>
    <lineage>
        <taxon>Eukaryota</taxon>
        <taxon>Viridiplantae</taxon>
        <taxon>Streptophyta</taxon>
        <taxon>Embryophyta</taxon>
        <taxon>Tracheophyta</taxon>
        <taxon>Spermatophyta</taxon>
        <taxon>Magnoliopsida</taxon>
        <taxon>eudicotyledons</taxon>
        <taxon>Gunneridae</taxon>
        <taxon>Pentapetalae</taxon>
        <taxon>rosids</taxon>
        <taxon>malvids</taxon>
        <taxon>Brassicales</taxon>
        <taxon>Brassicaceae</taxon>
        <taxon>Camelineae</taxon>
        <taxon>Arabidopsis</taxon>
    </lineage>
</organism>
<sequence length="556" mass="64862">MARKGNPISVRLGKNRSSDSSWFSDYYYGKFVYQDVNLRSYFGSIRPPTRLTFGFRLGRCIILHFPKRTFIHFFLPRRPRRLKRREKTRPGKEKGRWWTTFGKAGPIECLHSSDDTEEERNEVRGRGARKRVESIRLDDRKKQNEIRGWPKKKQRYGYHDRLPSIKKNLSKLLRISGAFKHPKYAGVVNDIAFLIENDDSFKKTKLFKLFFQNKSRSDGPTSYLRTLPAVRPSLNFLVMQYFFNTKNQINFDPVVVLNHFVAPGAAEPSTMGRANAQGRSLQKRIRSRIAFFVESLTSEKKCLAEAKNRLTHFIRLANDLRFAGTTKTTISLFPFFGATFFFLRDGVGVYNNLDAREQLLNQLRVKCWNLVGKDKIMELIEKLKNLGGIEELIKVIDMMIEIILRKRGIPYRYNSYFYEVKKMRSFLSNRTNTKTLIESVKIKSVYQSASLIAQDISFQLKNKRRSFHSIFAKIVKEIPKGVEGIRICFSGRLKDAAEKAQTKCYKHRKTSCNVFNHKIDYAPVEVFTRYGILGVKVWISYSQKKGRRAISETYEI</sequence>
<reference key="1">
    <citation type="journal article" date="1997" name="Nat. Genet.">
        <title>The mitochondrial genome of Arabidopsis thaliana contains 57 genes in 366,924 nucleotides.</title>
        <authorList>
            <person name="Unseld M."/>
            <person name="Marienfeld J.R."/>
            <person name="Brandt P."/>
            <person name="Brennicke A."/>
        </authorList>
    </citation>
    <scope>NUCLEOTIDE SEQUENCE [LARGE SCALE GENOMIC DNA]</scope>
    <source>
        <strain>cv. C24</strain>
    </source>
</reference>
<reference key="2">
    <citation type="journal article" date="1999" name="Proc. Natl. Acad. Sci. U.S.A.">
        <title>RNA editing in Arabidopsis mitochondria effects 441 C to U changes in ORFs.</title>
        <authorList>
            <person name="Giege P."/>
            <person name="Brennicke A."/>
        </authorList>
    </citation>
    <scope>NUCLEOTIDE SEQUENCE [GENOMIC DNA]</scope>
    <scope>RNA EDITING</scope>
</reference>
<reference key="3">
    <citation type="journal article" date="2018" name="Plant Cell">
        <title>Correction of persistent errors in Arabidopsis reference mitochondrial genomes.</title>
        <authorList>
            <person name="Sloan D.B."/>
            <person name="Wu Z."/>
            <person name="Sharbrough J."/>
        </authorList>
    </citation>
    <scope>NUCLEOTIDE SEQUENCE [LARGE SCALE GENOMIC DNA]</scope>
    <scope>RNA EDITING</scope>
    <source>
        <strain>cv. Columbia</strain>
    </source>
</reference>
<reference key="4">
    <citation type="journal article" date="1996" name="Plant Cell">
        <title>Altered mitochondrial gene expression in a maternal distorted leaf mutant of Arabidopsis induced by chloroplast mutator.</title>
        <authorList>
            <person name="Sakamoto W."/>
            <person name="Kondo H."/>
            <person name="Murata M."/>
            <person name="Motoyoshi F."/>
        </authorList>
    </citation>
    <scope>NUCLEOTIDE SEQUENCE [GENOMIC DNA] OF 26-556</scope>
    <source>
        <strain>cv. Landsberg erecta</strain>
    </source>
</reference>
<reference key="5">
    <citation type="journal article" date="2008" name="Genetics">
        <title>Genetic architecture of mitochondrial editing in Arabidopsis thaliana.</title>
        <authorList>
            <person name="Bentolila S."/>
            <person name="Elliott L.E."/>
            <person name="Hanson M.R."/>
        </authorList>
    </citation>
    <scope>NUCLEOTIDE SEQUENCE [MRNA] OF 22-539</scope>
    <scope>RNA EDITING</scope>
    <source>
        <strain>cv. Columbia</strain>
        <strain>cv. Landsberg erecta</strain>
        <tissue>Rosette leaf</tissue>
    </source>
</reference>
<reference key="6">
    <citation type="journal article" date="2023" name="Plant Cell">
        <title>An updated nomenclature for plant ribosomal protein genes.</title>
        <authorList>
            <person name="Scarpin M.R."/>
            <person name="Busche M."/>
            <person name="Martinez R.E."/>
            <person name="Harper L.C."/>
            <person name="Reiser L."/>
            <person name="Szakonyi D."/>
            <person name="Merchante C."/>
            <person name="Lan T."/>
            <person name="Xiong W."/>
            <person name="Mo B."/>
            <person name="Tang G."/>
            <person name="Chen X."/>
            <person name="Bailey-Serres J."/>
            <person name="Browning K.S."/>
            <person name="Brunkard J.O."/>
        </authorList>
    </citation>
    <scope>NOMENCLATURE</scope>
</reference>
<accession>Q95749</accession>
<accession>A0A2P2CLF3</accession>
<accession>A7KNJ9</accession>
<geneLocation type="mitochondrion"/>
<gene>
    <name type="primary">RPS3</name>
    <name type="ordered locus">AtMg00090</name>
</gene>
<comment type="subunit">
    <text evidence="5">Component of the mitochondrial ribosome small subunit.</text>
</comment>
<comment type="subcellular location">
    <subcellularLocation>
        <location>Mitochondrion</location>
    </subcellularLocation>
</comment>
<comment type="RNA editing">
    <location>
        <position position="22" evidence="1 2 3"/>
    </location>
    <location>
        <position position="172" evidence="1 2 3"/>
    </location>
    <location>
        <position position="296" evidence="1 2 3"/>
    </location>
    <location>
        <position position="451" evidence="1 2 3"/>
    </location>
    <location>
        <position position="512" evidence="1 2 3"/>
    </location>
    <location>
        <position position="524" evidence="1 2 3"/>
    </location>
    <location>
        <position position="527" evidence="1 2 3"/>
    </location>
    <location>
        <position position="533" evidence="1 2 3"/>
    </location>
</comment>
<comment type="similarity">
    <text evidence="5">Belongs to the universal ribosomal protein uS3 family.</text>
</comment>
<keyword id="KW-0002">3D-structure</keyword>
<keyword id="KW-0496">Mitochondrion</keyword>
<keyword id="KW-1185">Reference proteome</keyword>
<keyword id="KW-0687">Ribonucleoprotein</keyword>
<keyword id="KW-0689">Ribosomal protein</keyword>
<keyword id="KW-0691">RNA editing</keyword>
<dbReference type="EMBL" id="Y08501">
    <property type="protein sequence ID" value="CAA69755.3"/>
    <property type="status" value="ALT_SEQ"/>
    <property type="molecule type" value="Genomic_DNA"/>
</dbReference>
<dbReference type="EMBL" id="BK010421">
    <property type="protein sequence ID" value="DAB41497.2"/>
    <property type="molecule type" value="Genomic_DNA"/>
</dbReference>
<dbReference type="EMBL" id="D84192">
    <property type="protein sequence ID" value="BAA12250.1"/>
    <property type="status" value="ALT_SEQ"/>
    <property type="molecule type" value="Genomic_DNA"/>
</dbReference>
<dbReference type="EMBL" id="EF488942">
    <property type="protein sequence ID" value="ABS50654.1"/>
    <property type="molecule type" value="mRNA"/>
</dbReference>
<dbReference type="EMBL" id="EF488943">
    <property type="protein sequence ID" value="ABS50655.1"/>
    <property type="molecule type" value="mRNA"/>
</dbReference>
<dbReference type="RefSeq" id="NP_085481.1">
    <property type="nucleotide sequence ID" value="NC_001284.2"/>
</dbReference>
<dbReference type="PDB" id="6XYW">
    <property type="method" value="EM"/>
    <property type="resolution" value="3.86 A"/>
    <property type="chains" value="Bb=1-556"/>
</dbReference>
<dbReference type="PDBsum" id="6XYW"/>
<dbReference type="EMDB" id="EMD-10654"/>
<dbReference type="SMR" id="Q95749"/>
<dbReference type="BioGRID" id="4">
    <property type="interactions" value="1"/>
</dbReference>
<dbReference type="FunCoup" id="Q95749">
    <property type="interactions" value="64"/>
</dbReference>
<dbReference type="IntAct" id="Q95749">
    <property type="interactions" value="2"/>
</dbReference>
<dbReference type="STRING" id="3702.Q95749"/>
<dbReference type="PaxDb" id="3702-ATMG00090.1"/>
<dbReference type="Araport" id="ATMG00090"/>
<dbReference type="TAIR" id="ATMG00090">
    <property type="gene designation" value="RPS3"/>
</dbReference>
<dbReference type="eggNOG" id="ENOG502QSWK">
    <property type="taxonomic scope" value="Eukaryota"/>
</dbReference>
<dbReference type="InParanoid" id="Q95749"/>
<dbReference type="PRO" id="PR:Q95749"/>
<dbReference type="Proteomes" id="UP000006548">
    <property type="component" value="Mitochondrion MT"/>
</dbReference>
<dbReference type="ExpressionAtlas" id="Q95749">
    <property type="expression patterns" value="baseline and differential"/>
</dbReference>
<dbReference type="GO" id="GO:0005739">
    <property type="term" value="C:mitochondrion"/>
    <property type="evidence" value="ECO:0007669"/>
    <property type="project" value="UniProtKB-SubCell"/>
</dbReference>
<dbReference type="GO" id="GO:1990904">
    <property type="term" value="C:ribonucleoprotein complex"/>
    <property type="evidence" value="ECO:0007669"/>
    <property type="project" value="UniProtKB-KW"/>
</dbReference>
<dbReference type="GO" id="GO:0005840">
    <property type="term" value="C:ribosome"/>
    <property type="evidence" value="ECO:0007669"/>
    <property type="project" value="UniProtKB-KW"/>
</dbReference>
<dbReference type="GO" id="GO:0003723">
    <property type="term" value="F:RNA binding"/>
    <property type="evidence" value="ECO:0007669"/>
    <property type="project" value="InterPro"/>
</dbReference>
<dbReference type="GO" id="GO:0003735">
    <property type="term" value="F:structural constituent of ribosome"/>
    <property type="evidence" value="ECO:0007669"/>
    <property type="project" value="InterPro"/>
</dbReference>
<dbReference type="GO" id="GO:0006412">
    <property type="term" value="P:translation"/>
    <property type="evidence" value="ECO:0007669"/>
    <property type="project" value="InterPro"/>
</dbReference>
<dbReference type="Gene3D" id="3.30.1140.32">
    <property type="entry name" value="Ribosomal protein S3, C-terminal domain"/>
    <property type="match status" value="1"/>
</dbReference>
<dbReference type="InterPro" id="IPR009019">
    <property type="entry name" value="KH_sf_prok-type"/>
</dbReference>
<dbReference type="InterPro" id="IPR036419">
    <property type="entry name" value="Ribosomal_S3_C_sf"/>
</dbReference>
<dbReference type="InterPro" id="IPR001351">
    <property type="entry name" value="Ribosomal_uS3_C"/>
</dbReference>
<dbReference type="InterPro" id="IPR044954">
    <property type="entry name" value="Ribosomal_uS3m_plant"/>
</dbReference>
<dbReference type="PANTHER" id="PTHR35928">
    <property type="entry name" value="RIBOSOMAL PROTEIN S3, MITOCHONDRIAL"/>
    <property type="match status" value="1"/>
</dbReference>
<dbReference type="PANTHER" id="PTHR35928:SF2">
    <property type="entry name" value="SMALL RIBOSOMAL SUBUNIT PROTEIN US3M"/>
    <property type="match status" value="1"/>
</dbReference>
<dbReference type="Pfam" id="PF00189">
    <property type="entry name" value="Ribosomal_S3_C"/>
    <property type="match status" value="1"/>
</dbReference>
<dbReference type="SUPFAM" id="SSF54814">
    <property type="entry name" value="Prokaryotic type KH domain (KH-domain type II)"/>
    <property type="match status" value="1"/>
</dbReference>
<dbReference type="SUPFAM" id="SSF54821">
    <property type="entry name" value="Ribosomal protein S3 C-terminal domain"/>
    <property type="match status" value="1"/>
</dbReference>
<feature type="chain" id="PRO_0000130310" description="Small ribosomal subunit protein uS3m">
    <location>
        <begin position="1"/>
        <end position="556"/>
    </location>
</feature>
<feature type="sequence conflict" description="In Ref. 1; CAA69755." evidence="5" ref="1">
    <original>D</original>
    <variation>E</variation>
    <location>
        <position position="25"/>
    </location>
</feature>
<protein>
    <recommendedName>
        <fullName evidence="4">Small ribosomal subunit protein uS3m</fullName>
    </recommendedName>
    <alternativeName>
        <fullName>Ribosomal protein S3, mitochondrial</fullName>
    </alternativeName>
</protein>
<name>RT03_ARATH</name>